<accession>Q7WHL9</accession>
<evidence type="ECO:0000255" key="1">
    <source>
        <dbReference type="HAMAP-Rule" id="MF_00385"/>
    </source>
</evidence>
<evidence type="ECO:0000305" key="2"/>
<protein>
    <recommendedName>
        <fullName evidence="1">Small ribosomal subunit protein bS16</fullName>
    </recommendedName>
    <alternativeName>
        <fullName evidence="2">30S ribosomal protein S16</fullName>
    </alternativeName>
</protein>
<sequence>MLVIRLARGGSKKRPFYNLVATDSRNRRDGRFVERVGFYNPVAAEGTENLRIALDRVQYWTGNGALLSPAVERLVKEYSAKVSAAA</sequence>
<keyword id="KW-0687">Ribonucleoprotein</keyword>
<keyword id="KW-0689">Ribosomal protein</keyword>
<organism>
    <name type="scientific">Bordetella bronchiseptica (strain ATCC BAA-588 / NCTC 13252 / RB50)</name>
    <name type="common">Alcaligenes bronchisepticus</name>
    <dbReference type="NCBI Taxonomy" id="257310"/>
    <lineage>
        <taxon>Bacteria</taxon>
        <taxon>Pseudomonadati</taxon>
        <taxon>Pseudomonadota</taxon>
        <taxon>Betaproteobacteria</taxon>
        <taxon>Burkholderiales</taxon>
        <taxon>Alcaligenaceae</taxon>
        <taxon>Bordetella</taxon>
    </lineage>
</organism>
<name>RS16_BORBR</name>
<feature type="chain" id="PRO_0000167156" description="Small ribosomal subunit protein bS16">
    <location>
        <begin position="1"/>
        <end position="86"/>
    </location>
</feature>
<gene>
    <name evidence="1" type="primary">rpsP</name>
    <name type="ordered locus">BB3188</name>
</gene>
<proteinExistence type="inferred from homology"/>
<comment type="similarity">
    <text evidence="1">Belongs to the bacterial ribosomal protein bS16 family.</text>
</comment>
<comment type="sequence caution" evidence="2">
    <conflict type="erroneous initiation">
        <sequence resource="EMBL-CDS" id="CAE33680"/>
    </conflict>
</comment>
<dbReference type="EMBL" id="BX640446">
    <property type="protein sequence ID" value="CAE33680.1"/>
    <property type="status" value="ALT_INIT"/>
    <property type="molecule type" value="Genomic_DNA"/>
</dbReference>
<dbReference type="RefSeq" id="WP_010926757.1">
    <property type="nucleotide sequence ID" value="NC_002927.3"/>
</dbReference>
<dbReference type="SMR" id="Q7WHL9"/>
<dbReference type="GeneID" id="69601988"/>
<dbReference type="KEGG" id="bbr:BB3188"/>
<dbReference type="eggNOG" id="COG0228">
    <property type="taxonomic scope" value="Bacteria"/>
</dbReference>
<dbReference type="HOGENOM" id="CLU_100590_5_1_4"/>
<dbReference type="Proteomes" id="UP000001027">
    <property type="component" value="Chromosome"/>
</dbReference>
<dbReference type="GO" id="GO:0005737">
    <property type="term" value="C:cytoplasm"/>
    <property type="evidence" value="ECO:0007669"/>
    <property type="project" value="UniProtKB-ARBA"/>
</dbReference>
<dbReference type="GO" id="GO:0015935">
    <property type="term" value="C:small ribosomal subunit"/>
    <property type="evidence" value="ECO:0007669"/>
    <property type="project" value="TreeGrafter"/>
</dbReference>
<dbReference type="GO" id="GO:0003735">
    <property type="term" value="F:structural constituent of ribosome"/>
    <property type="evidence" value="ECO:0007669"/>
    <property type="project" value="InterPro"/>
</dbReference>
<dbReference type="GO" id="GO:0006412">
    <property type="term" value="P:translation"/>
    <property type="evidence" value="ECO:0007669"/>
    <property type="project" value="UniProtKB-UniRule"/>
</dbReference>
<dbReference type="Gene3D" id="3.30.1320.10">
    <property type="match status" value="1"/>
</dbReference>
<dbReference type="HAMAP" id="MF_00385">
    <property type="entry name" value="Ribosomal_bS16"/>
    <property type="match status" value="1"/>
</dbReference>
<dbReference type="InterPro" id="IPR000307">
    <property type="entry name" value="Ribosomal_bS16"/>
</dbReference>
<dbReference type="InterPro" id="IPR023803">
    <property type="entry name" value="Ribosomal_bS16_dom_sf"/>
</dbReference>
<dbReference type="NCBIfam" id="TIGR00002">
    <property type="entry name" value="S16"/>
    <property type="match status" value="1"/>
</dbReference>
<dbReference type="PANTHER" id="PTHR12919">
    <property type="entry name" value="30S RIBOSOMAL PROTEIN S16"/>
    <property type="match status" value="1"/>
</dbReference>
<dbReference type="PANTHER" id="PTHR12919:SF20">
    <property type="entry name" value="SMALL RIBOSOMAL SUBUNIT PROTEIN BS16M"/>
    <property type="match status" value="1"/>
</dbReference>
<dbReference type="Pfam" id="PF00886">
    <property type="entry name" value="Ribosomal_S16"/>
    <property type="match status" value="1"/>
</dbReference>
<dbReference type="SUPFAM" id="SSF54565">
    <property type="entry name" value="Ribosomal protein S16"/>
    <property type="match status" value="1"/>
</dbReference>
<reference key="1">
    <citation type="journal article" date="2003" name="Nat. Genet.">
        <title>Comparative analysis of the genome sequences of Bordetella pertussis, Bordetella parapertussis and Bordetella bronchiseptica.</title>
        <authorList>
            <person name="Parkhill J."/>
            <person name="Sebaihia M."/>
            <person name="Preston A."/>
            <person name="Murphy L.D."/>
            <person name="Thomson N.R."/>
            <person name="Harris D.E."/>
            <person name="Holden M.T.G."/>
            <person name="Churcher C.M."/>
            <person name="Bentley S.D."/>
            <person name="Mungall K.L."/>
            <person name="Cerdeno-Tarraga A.-M."/>
            <person name="Temple L."/>
            <person name="James K.D."/>
            <person name="Harris B."/>
            <person name="Quail M.A."/>
            <person name="Achtman M."/>
            <person name="Atkin R."/>
            <person name="Baker S."/>
            <person name="Basham D."/>
            <person name="Bason N."/>
            <person name="Cherevach I."/>
            <person name="Chillingworth T."/>
            <person name="Collins M."/>
            <person name="Cronin A."/>
            <person name="Davis P."/>
            <person name="Doggett J."/>
            <person name="Feltwell T."/>
            <person name="Goble A."/>
            <person name="Hamlin N."/>
            <person name="Hauser H."/>
            <person name="Holroyd S."/>
            <person name="Jagels K."/>
            <person name="Leather S."/>
            <person name="Moule S."/>
            <person name="Norberczak H."/>
            <person name="O'Neil S."/>
            <person name="Ormond D."/>
            <person name="Price C."/>
            <person name="Rabbinowitsch E."/>
            <person name="Rutter S."/>
            <person name="Sanders M."/>
            <person name="Saunders D."/>
            <person name="Seeger K."/>
            <person name="Sharp S."/>
            <person name="Simmonds M."/>
            <person name="Skelton J."/>
            <person name="Squares R."/>
            <person name="Squares S."/>
            <person name="Stevens K."/>
            <person name="Unwin L."/>
            <person name="Whitehead S."/>
            <person name="Barrell B.G."/>
            <person name="Maskell D.J."/>
        </authorList>
    </citation>
    <scope>NUCLEOTIDE SEQUENCE [LARGE SCALE GENOMIC DNA]</scope>
    <source>
        <strain>ATCC BAA-588 / NCTC 13252 / RB50</strain>
    </source>
</reference>